<evidence type="ECO:0000255" key="1">
    <source>
        <dbReference type="HAMAP-Rule" id="MF_00456"/>
    </source>
</evidence>
<organism>
    <name type="scientific">Burkholderia pseudomallei (strain 1710b)</name>
    <dbReference type="NCBI Taxonomy" id="320372"/>
    <lineage>
        <taxon>Bacteria</taxon>
        <taxon>Pseudomonadati</taxon>
        <taxon>Pseudomonadota</taxon>
        <taxon>Betaproteobacteria</taxon>
        <taxon>Burkholderiales</taxon>
        <taxon>Burkholderiaceae</taxon>
        <taxon>Burkholderia</taxon>
        <taxon>pseudomallei group</taxon>
    </lineage>
</organism>
<sequence length="372" mass="39233">MRSIIADSKRLVVKVGSSLVTNDGRGLDHDAIGRWAAQIAALRGAGKEVVLVSSGAIAEGMQRLGWSKRPREIDELQAAAAVGQMGLAQVYESRFAEHGIRTAQILLTHADLADRERYLNARSTLLTLLRLGVVPIINENDTVVTDEIKFGDNDTLGALVANLIEGDTLVILTDQPGLFTADPRKDPGATLVAEASAGAPELEAMAGGAGSSIGRGGMLTKILAAKRAAHSGANTVIASGRERDVLVRLAAGEAIGTQLIARTARMAARKQWMADHLQVRGHVVIDAGAVDKLTAGGKSLLPIGVVAVQGVFARGEVIACVDDTGREVARGITNYSSAETKLIQRKPSGEIETVLGYMLEPELIHRDNLVLV</sequence>
<protein>
    <recommendedName>
        <fullName evidence="1">Glutamate 5-kinase</fullName>
        <ecNumber evidence="1">2.7.2.11</ecNumber>
    </recommendedName>
    <alternativeName>
        <fullName evidence="1">Gamma-glutamyl kinase</fullName>
        <shortName evidence="1">GK</shortName>
    </alternativeName>
</protein>
<accession>Q3JNG1</accession>
<name>PROB_BURP1</name>
<proteinExistence type="inferred from homology"/>
<reference key="1">
    <citation type="journal article" date="2010" name="Genome Biol. Evol.">
        <title>Continuing evolution of Burkholderia mallei through genome reduction and large-scale rearrangements.</title>
        <authorList>
            <person name="Losada L."/>
            <person name="Ronning C.M."/>
            <person name="DeShazer D."/>
            <person name="Woods D."/>
            <person name="Fedorova N."/>
            <person name="Kim H.S."/>
            <person name="Shabalina S.A."/>
            <person name="Pearson T.R."/>
            <person name="Brinkac L."/>
            <person name="Tan P."/>
            <person name="Nandi T."/>
            <person name="Crabtree J."/>
            <person name="Badger J."/>
            <person name="Beckstrom-Sternberg S."/>
            <person name="Saqib M."/>
            <person name="Schutzer S.E."/>
            <person name="Keim P."/>
            <person name="Nierman W.C."/>
        </authorList>
    </citation>
    <scope>NUCLEOTIDE SEQUENCE [LARGE SCALE GENOMIC DNA]</scope>
    <source>
        <strain>1710b</strain>
    </source>
</reference>
<comment type="function">
    <text evidence="1">Catalyzes the transfer of a phosphate group to glutamate to form L-glutamate 5-phosphate.</text>
</comment>
<comment type="catalytic activity">
    <reaction evidence="1">
        <text>L-glutamate + ATP = L-glutamyl 5-phosphate + ADP</text>
        <dbReference type="Rhea" id="RHEA:14877"/>
        <dbReference type="ChEBI" id="CHEBI:29985"/>
        <dbReference type="ChEBI" id="CHEBI:30616"/>
        <dbReference type="ChEBI" id="CHEBI:58274"/>
        <dbReference type="ChEBI" id="CHEBI:456216"/>
        <dbReference type="EC" id="2.7.2.11"/>
    </reaction>
</comment>
<comment type="pathway">
    <text evidence="1">Amino-acid biosynthesis; L-proline biosynthesis; L-glutamate 5-semialdehyde from L-glutamate: step 1/2.</text>
</comment>
<comment type="subcellular location">
    <subcellularLocation>
        <location evidence="1">Cytoplasm</location>
    </subcellularLocation>
</comment>
<comment type="similarity">
    <text evidence="1">Belongs to the glutamate 5-kinase family.</text>
</comment>
<keyword id="KW-0028">Amino-acid biosynthesis</keyword>
<keyword id="KW-0067">ATP-binding</keyword>
<keyword id="KW-0963">Cytoplasm</keyword>
<keyword id="KW-0418">Kinase</keyword>
<keyword id="KW-0547">Nucleotide-binding</keyword>
<keyword id="KW-0641">Proline biosynthesis</keyword>
<keyword id="KW-0808">Transferase</keyword>
<dbReference type="EC" id="2.7.2.11" evidence="1"/>
<dbReference type="EMBL" id="CP000124">
    <property type="protein sequence ID" value="ABA48240.1"/>
    <property type="molecule type" value="Genomic_DNA"/>
</dbReference>
<dbReference type="RefSeq" id="WP_004194262.1">
    <property type="nucleotide sequence ID" value="NC_007434.1"/>
</dbReference>
<dbReference type="SMR" id="Q3JNG1"/>
<dbReference type="EnsemblBacteria" id="ABA48240">
    <property type="protein sequence ID" value="ABA48240"/>
    <property type="gene ID" value="BURPS1710b_3521"/>
</dbReference>
<dbReference type="GeneID" id="93061602"/>
<dbReference type="KEGG" id="bpm:BURPS1710b_3521"/>
<dbReference type="HOGENOM" id="CLU_025400_2_0_4"/>
<dbReference type="UniPathway" id="UPA00098">
    <property type="reaction ID" value="UER00359"/>
</dbReference>
<dbReference type="Proteomes" id="UP000002700">
    <property type="component" value="Chromosome I"/>
</dbReference>
<dbReference type="GO" id="GO:0005829">
    <property type="term" value="C:cytosol"/>
    <property type="evidence" value="ECO:0007669"/>
    <property type="project" value="TreeGrafter"/>
</dbReference>
<dbReference type="GO" id="GO:0005524">
    <property type="term" value="F:ATP binding"/>
    <property type="evidence" value="ECO:0007669"/>
    <property type="project" value="UniProtKB-KW"/>
</dbReference>
<dbReference type="GO" id="GO:0004349">
    <property type="term" value="F:glutamate 5-kinase activity"/>
    <property type="evidence" value="ECO:0007669"/>
    <property type="project" value="UniProtKB-UniRule"/>
</dbReference>
<dbReference type="GO" id="GO:0003723">
    <property type="term" value="F:RNA binding"/>
    <property type="evidence" value="ECO:0007669"/>
    <property type="project" value="InterPro"/>
</dbReference>
<dbReference type="GO" id="GO:0055129">
    <property type="term" value="P:L-proline biosynthetic process"/>
    <property type="evidence" value="ECO:0007669"/>
    <property type="project" value="UniProtKB-UniRule"/>
</dbReference>
<dbReference type="CDD" id="cd04242">
    <property type="entry name" value="AAK_G5K_ProB"/>
    <property type="match status" value="1"/>
</dbReference>
<dbReference type="CDD" id="cd21157">
    <property type="entry name" value="PUA_G5K"/>
    <property type="match status" value="1"/>
</dbReference>
<dbReference type="FunFam" id="2.30.130.10:FF:000007">
    <property type="entry name" value="Glutamate 5-kinase"/>
    <property type="match status" value="1"/>
</dbReference>
<dbReference type="FunFam" id="3.40.1160.10:FF:000018">
    <property type="entry name" value="Glutamate 5-kinase"/>
    <property type="match status" value="1"/>
</dbReference>
<dbReference type="Gene3D" id="3.40.1160.10">
    <property type="entry name" value="Acetylglutamate kinase-like"/>
    <property type="match status" value="1"/>
</dbReference>
<dbReference type="Gene3D" id="2.30.130.10">
    <property type="entry name" value="PUA domain"/>
    <property type="match status" value="1"/>
</dbReference>
<dbReference type="HAMAP" id="MF_00456">
    <property type="entry name" value="ProB"/>
    <property type="match status" value="1"/>
</dbReference>
<dbReference type="InterPro" id="IPR036393">
    <property type="entry name" value="AceGlu_kinase-like_sf"/>
</dbReference>
<dbReference type="InterPro" id="IPR001048">
    <property type="entry name" value="Asp/Glu/Uridylate_kinase"/>
</dbReference>
<dbReference type="InterPro" id="IPR041739">
    <property type="entry name" value="G5K_ProB"/>
</dbReference>
<dbReference type="InterPro" id="IPR001057">
    <property type="entry name" value="Glu/AcGlu_kinase"/>
</dbReference>
<dbReference type="InterPro" id="IPR011529">
    <property type="entry name" value="Glu_5kinase"/>
</dbReference>
<dbReference type="InterPro" id="IPR005715">
    <property type="entry name" value="Glu_5kinase/COase_Synthase"/>
</dbReference>
<dbReference type="InterPro" id="IPR019797">
    <property type="entry name" value="Glutamate_5-kinase_CS"/>
</dbReference>
<dbReference type="InterPro" id="IPR002478">
    <property type="entry name" value="PUA"/>
</dbReference>
<dbReference type="InterPro" id="IPR015947">
    <property type="entry name" value="PUA-like_sf"/>
</dbReference>
<dbReference type="InterPro" id="IPR036974">
    <property type="entry name" value="PUA_sf"/>
</dbReference>
<dbReference type="NCBIfam" id="TIGR01027">
    <property type="entry name" value="proB"/>
    <property type="match status" value="1"/>
</dbReference>
<dbReference type="PANTHER" id="PTHR43654">
    <property type="entry name" value="GLUTAMATE 5-KINASE"/>
    <property type="match status" value="1"/>
</dbReference>
<dbReference type="PANTHER" id="PTHR43654:SF1">
    <property type="entry name" value="ISOPENTENYL PHOSPHATE KINASE"/>
    <property type="match status" value="1"/>
</dbReference>
<dbReference type="Pfam" id="PF00696">
    <property type="entry name" value="AA_kinase"/>
    <property type="match status" value="1"/>
</dbReference>
<dbReference type="Pfam" id="PF01472">
    <property type="entry name" value="PUA"/>
    <property type="match status" value="1"/>
</dbReference>
<dbReference type="PIRSF" id="PIRSF000729">
    <property type="entry name" value="GK"/>
    <property type="match status" value="1"/>
</dbReference>
<dbReference type="PRINTS" id="PR00474">
    <property type="entry name" value="GLU5KINASE"/>
</dbReference>
<dbReference type="SMART" id="SM00359">
    <property type="entry name" value="PUA"/>
    <property type="match status" value="1"/>
</dbReference>
<dbReference type="SUPFAM" id="SSF53633">
    <property type="entry name" value="Carbamate kinase-like"/>
    <property type="match status" value="1"/>
</dbReference>
<dbReference type="SUPFAM" id="SSF88697">
    <property type="entry name" value="PUA domain-like"/>
    <property type="match status" value="1"/>
</dbReference>
<dbReference type="PROSITE" id="PS00902">
    <property type="entry name" value="GLUTAMATE_5_KINASE"/>
    <property type="match status" value="1"/>
</dbReference>
<dbReference type="PROSITE" id="PS50890">
    <property type="entry name" value="PUA"/>
    <property type="match status" value="1"/>
</dbReference>
<gene>
    <name evidence="1" type="primary">proB</name>
    <name type="ordered locus">BURPS1710b_3521</name>
</gene>
<feature type="chain" id="PRO_0000230038" description="Glutamate 5-kinase">
    <location>
        <begin position="1"/>
        <end position="372"/>
    </location>
</feature>
<feature type="domain" description="PUA" evidence="1">
    <location>
        <begin position="280"/>
        <end position="358"/>
    </location>
</feature>
<feature type="binding site" evidence="1">
    <location>
        <position position="14"/>
    </location>
    <ligand>
        <name>ATP</name>
        <dbReference type="ChEBI" id="CHEBI:30616"/>
    </ligand>
</feature>
<feature type="binding site" evidence="1">
    <location>
        <position position="54"/>
    </location>
    <ligand>
        <name>substrate</name>
    </ligand>
</feature>
<feature type="binding site" evidence="1">
    <location>
        <position position="141"/>
    </location>
    <ligand>
        <name>substrate</name>
    </ligand>
</feature>
<feature type="binding site" evidence="1">
    <location>
        <position position="153"/>
    </location>
    <ligand>
        <name>substrate</name>
    </ligand>
</feature>
<feature type="binding site" evidence="1">
    <location>
        <begin position="173"/>
        <end position="174"/>
    </location>
    <ligand>
        <name>ATP</name>
        <dbReference type="ChEBI" id="CHEBI:30616"/>
    </ligand>
</feature>